<comment type="function">
    <text evidence="1">Activates ribosomal RNA transcription. Plays a direct role in upstream activation of rRNA promoters.</text>
</comment>
<comment type="subunit">
    <text evidence="1">Homodimer.</text>
</comment>
<comment type="similarity">
    <text evidence="1">Belongs to the transcriptional regulatory Fis family.</text>
</comment>
<organism>
    <name type="scientific">Shewanella pealeana (strain ATCC 700345 / ANG-SQ1)</name>
    <dbReference type="NCBI Taxonomy" id="398579"/>
    <lineage>
        <taxon>Bacteria</taxon>
        <taxon>Pseudomonadati</taxon>
        <taxon>Pseudomonadota</taxon>
        <taxon>Gammaproteobacteria</taxon>
        <taxon>Alteromonadales</taxon>
        <taxon>Shewanellaceae</taxon>
        <taxon>Shewanella</taxon>
    </lineage>
</organism>
<dbReference type="EMBL" id="CP000851">
    <property type="protein sequence ID" value="ABV85717.1"/>
    <property type="molecule type" value="Genomic_DNA"/>
</dbReference>
<dbReference type="RefSeq" id="WP_012153658.1">
    <property type="nucleotide sequence ID" value="NC_009901.1"/>
</dbReference>
<dbReference type="SMR" id="A8GZI0"/>
<dbReference type="STRING" id="398579.Spea_0389"/>
<dbReference type="KEGG" id="spl:Spea_0389"/>
<dbReference type="eggNOG" id="COG2901">
    <property type="taxonomic scope" value="Bacteria"/>
</dbReference>
<dbReference type="HOGENOM" id="CLU_158040_3_3_6"/>
<dbReference type="OrthoDB" id="9802388at2"/>
<dbReference type="Proteomes" id="UP000002608">
    <property type="component" value="Chromosome"/>
</dbReference>
<dbReference type="GO" id="GO:0003700">
    <property type="term" value="F:DNA-binding transcription factor activity"/>
    <property type="evidence" value="ECO:0007669"/>
    <property type="project" value="UniProtKB-UniRule"/>
</dbReference>
<dbReference type="GO" id="GO:0043565">
    <property type="term" value="F:sequence-specific DNA binding"/>
    <property type="evidence" value="ECO:0007669"/>
    <property type="project" value="InterPro"/>
</dbReference>
<dbReference type="FunFam" id="1.10.10.60:FF:000006">
    <property type="entry name" value="DNA-binding protein Fis"/>
    <property type="match status" value="1"/>
</dbReference>
<dbReference type="Gene3D" id="1.10.10.60">
    <property type="entry name" value="Homeodomain-like"/>
    <property type="match status" value="1"/>
</dbReference>
<dbReference type="HAMAP" id="MF_00166">
    <property type="entry name" value="DNA_binding_Fis"/>
    <property type="match status" value="1"/>
</dbReference>
<dbReference type="InterPro" id="IPR005412">
    <property type="entry name" value="Fis_DNA-bd"/>
</dbReference>
<dbReference type="InterPro" id="IPR009057">
    <property type="entry name" value="Homeodomain-like_sf"/>
</dbReference>
<dbReference type="InterPro" id="IPR002197">
    <property type="entry name" value="HTH_Fis"/>
</dbReference>
<dbReference type="InterPro" id="IPR050207">
    <property type="entry name" value="Trans_regulatory_Fis"/>
</dbReference>
<dbReference type="NCBIfam" id="NF001659">
    <property type="entry name" value="PRK00430.1"/>
    <property type="match status" value="1"/>
</dbReference>
<dbReference type="PANTHER" id="PTHR47918">
    <property type="entry name" value="DNA-BINDING PROTEIN FIS"/>
    <property type="match status" value="1"/>
</dbReference>
<dbReference type="PANTHER" id="PTHR47918:SF1">
    <property type="entry name" value="DNA-BINDING PROTEIN FIS"/>
    <property type="match status" value="1"/>
</dbReference>
<dbReference type="Pfam" id="PF02954">
    <property type="entry name" value="HTH_8"/>
    <property type="match status" value="1"/>
</dbReference>
<dbReference type="PIRSF" id="PIRSF002097">
    <property type="entry name" value="DNA-binding_Fis"/>
    <property type="match status" value="1"/>
</dbReference>
<dbReference type="PRINTS" id="PR01591">
    <property type="entry name" value="DNABINDNGFIS"/>
</dbReference>
<dbReference type="PRINTS" id="PR01590">
    <property type="entry name" value="HTHFIS"/>
</dbReference>
<dbReference type="SUPFAM" id="SSF46689">
    <property type="entry name" value="Homeodomain-like"/>
    <property type="match status" value="1"/>
</dbReference>
<proteinExistence type="inferred from homology"/>
<keyword id="KW-0010">Activator</keyword>
<keyword id="KW-0238">DNA-binding</keyword>
<keyword id="KW-1185">Reference proteome</keyword>
<keyword id="KW-0804">Transcription</keyword>
<keyword id="KW-0805">Transcription regulation</keyword>
<protein>
    <recommendedName>
        <fullName evidence="1">DNA-binding protein Fis</fullName>
    </recommendedName>
</protein>
<name>FIS_SHEPA</name>
<sequence length="101" mass="11344">MFDQTTHTEVHPLTVGKIETASGAIKPQLLRDAVKRAVTNFFAQMDGQEAEEVYEMVLSEVEAPLLDIIMQHTRGNQTRAANMLGINRGTLRKKLKKYGMN</sequence>
<accession>A8GZI0</accession>
<gene>
    <name evidence="1" type="primary">fis</name>
    <name type="ordered locus">Spea_0389</name>
</gene>
<feature type="chain" id="PRO_1000076986" description="DNA-binding protein Fis">
    <location>
        <begin position="1"/>
        <end position="101"/>
    </location>
</feature>
<feature type="DNA-binding region" description="H-T-H motif" evidence="1">
    <location>
        <begin position="77"/>
        <end position="96"/>
    </location>
</feature>
<evidence type="ECO:0000255" key="1">
    <source>
        <dbReference type="HAMAP-Rule" id="MF_00166"/>
    </source>
</evidence>
<reference key="1">
    <citation type="submission" date="2007-10" db="EMBL/GenBank/DDBJ databases">
        <title>Complete sequence of Shewanella pealeana ATCC 700345.</title>
        <authorList>
            <consortium name="US DOE Joint Genome Institute"/>
            <person name="Copeland A."/>
            <person name="Lucas S."/>
            <person name="Lapidus A."/>
            <person name="Barry K."/>
            <person name="Glavina del Rio T."/>
            <person name="Dalin E."/>
            <person name="Tice H."/>
            <person name="Pitluck S."/>
            <person name="Chertkov O."/>
            <person name="Brettin T."/>
            <person name="Bruce D."/>
            <person name="Detter J.C."/>
            <person name="Han C."/>
            <person name="Schmutz J."/>
            <person name="Larimer F."/>
            <person name="Land M."/>
            <person name="Hauser L."/>
            <person name="Kyrpides N."/>
            <person name="Kim E."/>
            <person name="Zhao J.-S.Z."/>
            <person name="Manno D."/>
            <person name="Hawari J."/>
            <person name="Richardson P."/>
        </authorList>
    </citation>
    <scope>NUCLEOTIDE SEQUENCE [LARGE SCALE GENOMIC DNA]</scope>
    <source>
        <strain>ATCC 700345 / ANG-SQ1</strain>
    </source>
</reference>